<protein>
    <recommendedName>
        <fullName evidence="1">Phospho-N-acetylmuramoyl-pentapeptide-transferase</fullName>
        <ecNumber evidence="1">2.7.8.13</ecNumber>
    </recommendedName>
    <alternativeName>
        <fullName evidence="1">UDP-MurNAc-pentapeptide phosphotransferase</fullName>
    </alternativeName>
</protein>
<evidence type="ECO:0000255" key="1">
    <source>
        <dbReference type="HAMAP-Rule" id="MF_00038"/>
    </source>
</evidence>
<comment type="function">
    <text evidence="1">Catalyzes the initial step of the lipid cycle reactions in the biosynthesis of the cell wall peptidoglycan: transfers peptidoglycan precursor phospho-MurNAc-pentapeptide from UDP-MurNAc-pentapeptide onto the lipid carrier undecaprenyl phosphate, yielding undecaprenyl-pyrophosphoryl-MurNAc-pentapeptide, known as lipid I.</text>
</comment>
<comment type="catalytic activity">
    <reaction evidence="1">
        <text>UDP-N-acetyl-alpha-D-muramoyl-L-alanyl-gamma-D-glutamyl-meso-2,6-diaminopimeloyl-D-alanyl-D-alanine + di-trans,octa-cis-undecaprenyl phosphate = di-trans,octa-cis-undecaprenyl diphospho-N-acetyl-alpha-D-muramoyl-L-alanyl-D-glutamyl-meso-2,6-diaminopimeloyl-D-alanyl-D-alanine + UMP</text>
        <dbReference type="Rhea" id="RHEA:28386"/>
        <dbReference type="ChEBI" id="CHEBI:57865"/>
        <dbReference type="ChEBI" id="CHEBI:60392"/>
        <dbReference type="ChEBI" id="CHEBI:61386"/>
        <dbReference type="ChEBI" id="CHEBI:61387"/>
        <dbReference type="EC" id="2.7.8.13"/>
    </reaction>
</comment>
<comment type="cofactor">
    <cofactor evidence="1">
        <name>Mg(2+)</name>
        <dbReference type="ChEBI" id="CHEBI:18420"/>
    </cofactor>
</comment>
<comment type="pathway">
    <text evidence="1">Cell wall biogenesis; peptidoglycan biosynthesis.</text>
</comment>
<comment type="subcellular location">
    <subcellularLocation>
        <location evidence="1">Cell inner membrane</location>
        <topology evidence="1">Multi-pass membrane protein</topology>
    </subcellularLocation>
</comment>
<comment type="similarity">
    <text evidence="1">Belongs to the glycosyltransferase 4 family. MraY subfamily.</text>
</comment>
<organism>
    <name type="scientific">Methylobacillus flagellatus (strain ATCC 51484 / DSM 6875 / VKM B-1610 / KT)</name>
    <dbReference type="NCBI Taxonomy" id="265072"/>
    <lineage>
        <taxon>Bacteria</taxon>
        <taxon>Pseudomonadati</taxon>
        <taxon>Pseudomonadota</taxon>
        <taxon>Betaproteobacteria</taxon>
        <taxon>Nitrosomonadales</taxon>
        <taxon>Methylophilaceae</taxon>
        <taxon>Methylobacillus</taxon>
    </lineage>
</organism>
<dbReference type="EC" id="2.7.8.13" evidence="1"/>
<dbReference type="EMBL" id="CP000284">
    <property type="protein sequence ID" value="ABE50539.1"/>
    <property type="molecule type" value="Genomic_DNA"/>
</dbReference>
<dbReference type="RefSeq" id="WP_011480493.1">
    <property type="nucleotide sequence ID" value="NC_007947.1"/>
</dbReference>
<dbReference type="SMR" id="Q1GYZ8"/>
<dbReference type="STRING" id="265072.Mfla_2272"/>
<dbReference type="KEGG" id="mfa:Mfla_2272"/>
<dbReference type="eggNOG" id="COG0472">
    <property type="taxonomic scope" value="Bacteria"/>
</dbReference>
<dbReference type="HOGENOM" id="CLU_023982_0_0_4"/>
<dbReference type="OrthoDB" id="9805475at2"/>
<dbReference type="UniPathway" id="UPA00219"/>
<dbReference type="Proteomes" id="UP000002440">
    <property type="component" value="Chromosome"/>
</dbReference>
<dbReference type="GO" id="GO:0005886">
    <property type="term" value="C:plasma membrane"/>
    <property type="evidence" value="ECO:0007669"/>
    <property type="project" value="UniProtKB-SubCell"/>
</dbReference>
<dbReference type="GO" id="GO:0046872">
    <property type="term" value="F:metal ion binding"/>
    <property type="evidence" value="ECO:0007669"/>
    <property type="project" value="UniProtKB-KW"/>
</dbReference>
<dbReference type="GO" id="GO:0008963">
    <property type="term" value="F:phospho-N-acetylmuramoyl-pentapeptide-transferase activity"/>
    <property type="evidence" value="ECO:0007669"/>
    <property type="project" value="UniProtKB-UniRule"/>
</dbReference>
<dbReference type="GO" id="GO:0051992">
    <property type="term" value="F:UDP-N-acetylmuramoyl-L-alanyl-D-glutamyl-meso-2,6-diaminopimelyl-D-alanyl-D-alanine:undecaprenyl-phosphate transferase activity"/>
    <property type="evidence" value="ECO:0007669"/>
    <property type="project" value="RHEA"/>
</dbReference>
<dbReference type="GO" id="GO:0051301">
    <property type="term" value="P:cell division"/>
    <property type="evidence" value="ECO:0007669"/>
    <property type="project" value="UniProtKB-KW"/>
</dbReference>
<dbReference type="GO" id="GO:0071555">
    <property type="term" value="P:cell wall organization"/>
    <property type="evidence" value="ECO:0007669"/>
    <property type="project" value="UniProtKB-KW"/>
</dbReference>
<dbReference type="GO" id="GO:0009252">
    <property type="term" value="P:peptidoglycan biosynthetic process"/>
    <property type="evidence" value="ECO:0007669"/>
    <property type="project" value="UniProtKB-UniRule"/>
</dbReference>
<dbReference type="GO" id="GO:0008360">
    <property type="term" value="P:regulation of cell shape"/>
    <property type="evidence" value="ECO:0007669"/>
    <property type="project" value="UniProtKB-KW"/>
</dbReference>
<dbReference type="CDD" id="cd06852">
    <property type="entry name" value="GT_MraY"/>
    <property type="match status" value="1"/>
</dbReference>
<dbReference type="HAMAP" id="MF_00038">
    <property type="entry name" value="MraY"/>
    <property type="match status" value="1"/>
</dbReference>
<dbReference type="InterPro" id="IPR000715">
    <property type="entry name" value="Glycosyl_transferase_4"/>
</dbReference>
<dbReference type="InterPro" id="IPR003524">
    <property type="entry name" value="PNAcMuramoyl-5peptid_Trfase"/>
</dbReference>
<dbReference type="InterPro" id="IPR018480">
    <property type="entry name" value="PNAcMuramoyl-5peptid_Trfase_CS"/>
</dbReference>
<dbReference type="NCBIfam" id="TIGR00445">
    <property type="entry name" value="mraY"/>
    <property type="match status" value="1"/>
</dbReference>
<dbReference type="PANTHER" id="PTHR22926">
    <property type="entry name" value="PHOSPHO-N-ACETYLMURAMOYL-PENTAPEPTIDE-TRANSFERASE"/>
    <property type="match status" value="1"/>
</dbReference>
<dbReference type="PANTHER" id="PTHR22926:SF5">
    <property type="entry name" value="PHOSPHO-N-ACETYLMURAMOYL-PENTAPEPTIDE-TRANSFERASE HOMOLOG"/>
    <property type="match status" value="1"/>
</dbReference>
<dbReference type="Pfam" id="PF00953">
    <property type="entry name" value="Glycos_transf_4"/>
    <property type="match status" value="1"/>
</dbReference>
<dbReference type="Pfam" id="PF10555">
    <property type="entry name" value="MraY_sig1"/>
    <property type="match status" value="1"/>
</dbReference>
<dbReference type="PROSITE" id="PS01347">
    <property type="entry name" value="MRAY_1"/>
    <property type="match status" value="1"/>
</dbReference>
<dbReference type="PROSITE" id="PS01348">
    <property type="entry name" value="MRAY_2"/>
    <property type="match status" value="1"/>
</dbReference>
<keyword id="KW-0131">Cell cycle</keyword>
<keyword id="KW-0132">Cell division</keyword>
<keyword id="KW-0997">Cell inner membrane</keyword>
<keyword id="KW-1003">Cell membrane</keyword>
<keyword id="KW-0133">Cell shape</keyword>
<keyword id="KW-0961">Cell wall biogenesis/degradation</keyword>
<keyword id="KW-0460">Magnesium</keyword>
<keyword id="KW-0472">Membrane</keyword>
<keyword id="KW-0479">Metal-binding</keyword>
<keyword id="KW-0573">Peptidoglycan synthesis</keyword>
<keyword id="KW-1185">Reference proteome</keyword>
<keyword id="KW-0808">Transferase</keyword>
<keyword id="KW-0812">Transmembrane</keyword>
<keyword id="KW-1133">Transmembrane helix</keyword>
<sequence>MLLELARWLAQDIRGFNVFNYITLRAVLATLTALTISFLVGPKLIRKLTEYKVGQSVRDDGPQTHLVKAGTPTMGGALILIAIVISTLLWADLSNRFVWVVLITTLGFGVIGWVDDWRKVVYRNPKGLSAKAKYFWQSLIGAGVAAYLFHTATVPAETELIVPFFKHLVLPLGAVSFIVLTYFVIVGTSNAVNLTDGLDGLAIMPTVMVASALAVFAYVAGHLYFSKYLGVPYVPGAGELTVFCAAIGGAGLGFLWFNAYPAEVFMGDVGALALGAALGTVAVIVRQEIVLFIMGGVFVMETISVMLQVGSFKLTGKRIFRMAPLHHHYELKGWKETQVVVRFWIITMMLVLVGLSTLKLR</sequence>
<accession>Q1GYZ8</accession>
<name>MRAY_METFK</name>
<proteinExistence type="inferred from homology"/>
<feature type="chain" id="PRO_1000003008" description="Phospho-N-acetylmuramoyl-pentapeptide-transferase">
    <location>
        <begin position="1"/>
        <end position="361"/>
    </location>
</feature>
<feature type="transmembrane region" description="Helical" evidence="1">
    <location>
        <begin position="21"/>
        <end position="41"/>
    </location>
</feature>
<feature type="transmembrane region" description="Helical" evidence="1">
    <location>
        <begin position="73"/>
        <end position="93"/>
    </location>
</feature>
<feature type="transmembrane region" description="Helical" evidence="1">
    <location>
        <begin position="97"/>
        <end position="117"/>
    </location>
</feature>
<feature type="transmembrane region" description="Helical" evidence="1">
    <location>
        <begin position="134"/>
        <end position="154"/>
    </location>
</feature>
<feature type="transmembrane region" description="Helical" evidence="1">
    <location>
        <begin position="168"/>
        <end position="188"/>
    </location>
</feature>
<feature type="transmembrane region" description="Helical" evidence="1">
    <location>
        <begin position="200"/>
        <end position="220"/>
    </location>
</feature>
<feature type="transmembrane region" description="Helical" evidence="1">
    <location>
        <begin position="237"/>
        <end position="257"/>
    </location>
</feature>
<feature type="transmembrane region" description="Helical" evidence="1">
    <location>
        <begin position="264"/>
        <end position="284"/>
    </location>
</feature>
<feature type="transmembrane region" description="Helical" evidence="1">
    <location>
        <begin position="289"/>
        <end position="309"/>
    </location>
</feature>
<feature type="transmembrane region" description="Helical" evidence="1">
    <location>
        <begin position="338"/>
        <end position="358"/>
    </location>
</feature>
<reference key="1">
    <citation type="submission" date="2006-03" db="EMBL/GenBank/DDBJ databases">
        <title>Complete sequence of Methylobacillus flagellatus KT.</title>
        <authorList>
            <consortium name="US DOE Joint Genome Institute"/>
            <person name="Copeland A."/>
            <person name="Lucas S."/>
            <person name="Lapidus A."/>
            <person name="Barry K."/>
            <person name="Detter J.C."/>
            <person name="Glavina del Rio T."/>
            <person name="Hammon N."/>
            <person name="Israni S."/>
            <person name="Dalin E."/>
            <person name="Tice H."/>
            <person name="Pitluck S."/>
            <person name="Brettin T."/>
            <person name="Bruce D."/>
            <person name="Han C."/>
            <person name="Tapia R."/>
            <person name="Saunders E."/>
            <person name="Gilna P."/>
            <person name="Schmutz J."/>
            <person name="Larimer F."/>
            <person name="Land M."/>
            <person name="Kyrpides N."/>
            <person name="Anderson I."/>
            <person name="Richardson P."/>
        </authorList>
    </citation>
    <scope>NUCLEOTIDE SEQUENCE [LARGE SCALE GENOMIC DNA]</scope>
    <source>
        <strain>ATCC 51484 / DSM 6875 / VKM B-1610 / KT</strain>
    </source>
</reference>
<gene>
    <name evidence="1" type="primary">mraY</name>
    <name type="ordered locus">Mfla_2272</name>
</gene>